<keyword id="KW-0997">Cell inner membrane</keyword>
<keyword id="KW-1003">Cell membrane</keyword>
<keyword id="KW-0406">Ion transport</keyword>
<keyword id="KW-0408">Iron</keyword>
<keyword id="KW-0472">Membrane</keyword>
<keyword id="KW-0479">Metal-binding</keyword>
<keyword id="KW-0812">Transmembrane</keyword>
<keyword id="KW-1133">Transmembrane helix</keyword>
<keyword id="KW-0813">Transport</keyword>
<keyword id="KW-0862">Zinc</keyword>
<keyword id="KW-0864">Zinc transport</keyword>
<gene>
    <name evidence="1" type="primary">zupT</name>
    <name type="ordered locus">SFV_3084</name>
</gene>
<accession>Q0T0L8</accession>
<dbReference type="EMBL" id="CP000266">
    <property type="protein sequence ID" value="ABF05147.1"/>
    <property type="molecule type" value="Genomic_DNA"/>
</dbReference>
<dbReference type="RefSeq" id="WP_005051906.1">
    <property type="nucleotide sequence ID" value="NC_008258.1"/>
</dbReference>
<dbReference type="SMR" id="Q0T0L8"/>
<dbReference type="KEGG" id="sfv:SFV_3084"/>
<dbReference type="HOGENOM" id="CLU_015114_1_3_6"/>
<dbReference type="Proteomes" id="UP000000659">
    <property type="component" value="Chromosome"/>
</dbReference>
<dbReference type="GO" id="GO:0005886">
    <property type="term" value="C:plasma membrane"/>
    <property type="evidence" value="ECO:0007669"/>
    <property type="project" value="UniProtKB-SubCell"/>
</dbReference>
<dbReference type="GO" id="GO:0046872">
    <property type="term" value="F:metal ion binding"/>
    <property type="evidence" value="ECO:0007669"/>
    <property type="project" value="UniProtKB-KW"/>
</dbReference>
<dbReference type="GO" id="GO:0005385">
    <property type="term" value="F:zinc ion transmembrane transporter activity"/>
    <property type="evidence" value="ECO:0007669"/>
    <property type="project" value="UniProtKB-UniRule"/>
</dbReference>
<dbReference type="HAMAP" id="MF_00548">
    <property type="entry name" value="ZupT"/>
    <property type="match status" value="1"/>
</dbReference>
<dbReference type="InterPro" id="IPR003689">
    <property type="entry name" value="ZIP"/>
</dbReference>
<dbReference type="InterPro" id="IPR023498">
    <property type="entry name" value="Zn_transptr_ZupT"/>
</dbReference>
<dbReference type="NCBIfam" id="NF003243">
    <property type="entry name" value="PRK04201.1"/>
    <property type="match status" value="1"/>
</dbReference>
<dbReference type="PANTHER" id="PTHR11040:SF205">
    <property type="entry name" value="ZINC TRANSPORTER ZUPT"/>
    <property type="match status" value="1"/>
</dbReference>
<dbReference type="PANTHER" id="PTHR11040">
    <property type="entry name" value="ZINC/IRON TRANSPORTER"/>
    <property type="match status" value="1"/>
</dbReference>
<dbReference type="Pfam" id="PF02535">
    <property type="entry name" value="Zip"/>
    <property type="match status" value="2"/>
</dbReference>
<evidence type="ECO:0000255" key="1">
    <source>
        <dbReference type="HAMAP-Rule" id="MF_00548"/>
    </source>
</evidence>
<proteinExistence type="inferred from homology"/>
<comment type="function">
    <text evidence="1">Mediates zinc uptake. May also transport other divalent cations.</text>
</comment>
<comment type="catalytic activity">
    <reaction evidence="1">
        <text>Zn(2+)(in) = Zn(2+)(out)</text>
        <dbReference type="Rhea" id="RHEA:29351"/>
        <dbReference type="ChEBI" id="CHEBI:29105"/>
    </reaction>
</comment>
<comment type="subcellular location">
    <subcellularLocation>
        <location evidence="1">Cell inner membrane</location>
        <topology evidence="1">Multi-pass membrane protein</topology>
    </subcellularLocation>
</comment>
<comment type="similarity">
    <text evidence="1">Belongs to the ZIP transporter (TC 2.A.5) family. ZupT subfamily.</text>
</comment>
<feature type="chain" id="PRO_1000017779" description="Zinc transporter ZupT">
    <location>
        <begin position="1"/>
        <end position="257"/>
    </location>
</feature>
<feature type="transmembrane region" description="Helical" evidence="1">
    <location>
        <begin position="5"/>
        <end position="25"/>
    </location>
</feature>
<feature type="transmembrane region" description="Helical" evidence="1">
    <location>
        <begin position="32"/>
        <end position="52"/>
    </location>
</feature>
<feature type="transmembrane region" description="Helical" evidence="1">
    <location>
        <begin position="61"/>
        <end position="81"/>
    </location>
</feature>
<feature type="transmembrane region" description="Helical" evidence="1">
    <location>
        <begin position="109"/>
        <end position="129"/>
    </location>
</feature>
<feature type="transmembrane region" description="Helical" evidence="1">
    <location>
        <begin position="137"/>
        <end position="157"/>
    </location>
</feature>
<feature type="transmembrane region" description="Helical" evidence="1">
    <location>
        <begin position="171"/>
        <end position="191"/>
    </location>
</feature>
<feature type="transmembrane region" description="Helical" evidence="1">
    <location>
        <begin position="195"/>
        <end position="215"/>
    </location>
</feature>
<feature type="transmembrane region" description="Helical" evidence="1">
    <location>
        <begin position="236"/>
        <end position="256"/>
    </location>
</feature>
<feature type="binding site" description="M2 metal binding site" evidence="1">
    <location>
        <position position="120"/>
    </location>
    <ligand>
        <name>Fe(2+)</name>
        <dbReference type="ChEBI" id="CHEBI:29033"/>
    </ligand>
</feature>
<feature type="binding site" description="M2 metal binding site" evidence="1">
    <location>
        <position position="123"/>
    </location>
    <ligand>
        <name>Fe(2+)</name>
        <dbReference type="ChEBI" id="CHEBI:29033"/>
    </ligand>
</feature>
<feature type="binding site" description="M1 metal binding site" evidence="1">
    <location>
        <position position="123"/>
    </location>
    <ligand>
        <name>Zn(2+)</name>
        <dbReference type="ChEBI" id="CHEBI:29105"/>
    </ligand>
</feature>
<feature type="binding site" description="M1 metal binding site" evidence="1">
    <location>
        <position position="148"/>
    </location>
    <ligand>
        <name>Zn(2+)</name>
        <dbReference type="ChEBI" id="CHEBI:29105"/>
    </ligand>
</feature>
<feature type="binding site" description="M2 metal binding site" evidence="1">
    <location>
        <position position="149"/>
    </location>
    <ligand>
        <name>Fe(2+)</name>
        <dbReference type="ChEBI" id="CHEBI:29033"/>
    </ligand>
</feature>
<feature type="binding site" description="M2 metal binding site" evidence="1">
    <location>
        <position position="152"/>
    </location>
    <ligand>
        <name>Fe(2+)</name>
        <dbReference type="ChEBI" id="CHEBI:29033"/>
    </ligand>
</feature>
<feature type="binding site" description="M1 metal binding site" evidence="1">
    <location>
        <position position="152"/>
    </location>
    <ligand>
        <name>Zn(2+)</name>
        <dbReference type="ChEBI" id="CHEBI:29105"/>
    </ligand>
</feature>
<feature type="binding site" description="M2 metal binding site" evidence="1">
    <location>
        <position position="181"/>
    </location>
    <ligand>
        <name>Fe(2+)</name>
        <dbReference type="ChEBI" id="CHEBI:29033"/>
    </ligand>
</feature>
<protein>
    <recommendedName>
        <fullName evidence="1">Zinc transporter ZupT</fullName>
    </recommendedName>
</protein>
<reference key="1">
    <citation type="journal article" date="2006" name="BMC Genomics">
        <title>Complete genome sequence of Shigella flexneri 5b and comparison with Shigella flexneri 2a.</title>
        <authorList>
            <person name="Nie H."/>
            <person name="Yang F."/>
            <person name="Zhang X."/>
            <person name="Yang J."/>
            <person name="Chen L."/>
            <person name="Wang J."/>
            <person name="Xiong Z."/>
            <person name="Peng J."/>
            <person name="Sun L."/>
            <person name="Dong J."/>
            <person name="Xue Y."/>
            <person name="Xu X."/>
            <person name="Chen S."/>
            <person name="Yao Z."/>
            <person name="Shen Y."/>
            <person name="Jin Q."/>
        </authorList>
    </citation>
    <scope>NUCLEOTIDE SEQUENCE [LARGE SCALE GENOMIC DNA]</scope>
    <source>
        <strain>8401</strain>
    </source>
</reference>
<sequence length="257" mass="26501">MSVPLILTILAGAATFIGAFLGVLGQKPSNRLLAFSLGFAAGIMLLISLMEMLPAALAAEGMSPVLGYGMFIFGLLGYFGLDRMLPHAHPQDLMQKSVQLLPKSIKRTAILLTLGISLHNFPEGIATFVTASSNLELGFGIALAVALHNIPEGLAVAGPVYAATGSKRTAILWAGISGLAEILGGVLAWLILGSMISPVVMAAIMAAVAGIMVALSVDELMPLAKEIDPNNNPSYGVLCGMSVMGFSLVLLQTAGIG</sequence>
<name>ZUPT_SHIF8</name>
<organism>
    <name type="scientific">Shigella flexneri serotype 5b (strain 8401)</name>
    <dbReference type="NCBI Taxonomy" id="373384"/>
    <lineage>
        <taxon>Bacteria</taxon>
        <taxon>Pseudomonadati</taxon>
        <taxon>Pseudomonadota</taxon>
        <taxon>Gammaproteobacteria</taxon>
        <taxon>Enterobacterales</taxon>
        <taxon>Enterobacteriaceae</taxon>
        <taxon>Shigella</taxon>
    </lineage>
</organism>